<accession>Q8RP81</accession>
<proteinExistence type="evidence at protein level"/>
<comment type="function">
    <text evidence="1">Catalyzes the reversible conversion of 2-phosphoglycerate (2-PG) into phosphoenolpyruvate (PEP). It is essential for the degradation of carbohydrates via glycolysis.</text>
</comment>
<comment type="catalytic activity">
    <reaction evidence="1">
        <text>(2R)-2-phosphoglycerate = phosphoenolpyruvate + H2O</text>
        <dbReference type="Rhea" id="RHEA:10164"/>
        <dbReference type="ChEBI" id="CHEBI:15377"/>
        <dbReference type="ChEBI" id="CHEBI:58289"/>
        <dbReference type="ChEBI" id="CHEBI:58702"/>
        <dbReference type="EC" id="4.2.1.11"/>
    </reaction>
</comment>
<comment type="cofactor">
    <cofactor evidence="1">
        <name>Mg(2+)</name>
        <dbReference type="ChEBI" id="CHEBI:18420"/>
    </cofactor>
    <text evidence="1">Binds a second Mg(2+) ion via substrate during catalysis.</text>
</comment>
<comment type="pathway">
    <text evidence="1">Carbohydrate degradation; glycolysis; pyruvate from D-glyceraldehyde 3-phosphate: step 4/5.</text>
</comment>
<comment type="subcellular location">
    <subcellularLocation>
        <location evidence="1">Cytoplasm</location>
    </subcellularLocation>
    <subcellularLocation>
        <location evidence="1 2">Secreted</location>
    </subcellularLocation>
    <subcellularLocation>
        <location evidence="1">Cell surface</location>
    </subcellularLocation>
    <text evidence="1 2">Fractions of enolase are present in both the cytoplasm and on the cell surface (PubMed:11854208).</text>
</comment>
<comment type="similarity">
    <text evidence="1">Belongs to the enolase family.</text>
</comment>
<reference key="1">
    <citation type="journal article" date="2002" name="Infect. Immun.">
        <title>Identification of major outer surface proteins of Streptococcus agalactiae.</title>
        <authorList>
            <person name="Hughes M.J."/>
            <person name="Moore J.C."/>
            <person name="Lane J.D."/>
            <person name="Wilson R."/>
            <person name="Pribul P.K."/>
            <person name="Younes Z.N."/>
            <person name="Dobson R.J."/>
            <person name="Everest P."/>
            <person name="Reason A.J."/>
            <person name="Redfern J.M."/>
            <person name="Greer F.M."/>
            <person name="Paxton T."/>
            <person name="Panico M."/>
            <person name="Morris H.R."/>
            <person name="Feldman R.G."/>
            <person name="Santangelo J.D."/>
        </authorList>
    </citation>
    <scope>NUCLEOTIDE SEQUENCE [GENOMIC DNA]</scope>
    <scope>PROTEIN SEQUENCE OF 199-203; 212-220 AND 408-413</scope>
    <scope>IDENTIFICATION BY MASS SPECTROMETRY</scope>
    <scope>SUBCELLULAR LOCATION</scope>
    <source>
        <strain>M732</strain>
    </source>
</reference>
<sequence>MAIITDVYAREVLDSRGNPTLEVEVYTESGAFGRGMVPSGASTGEHEAVELRDGDKSRYGGLGTQKAVDNVNNVIAEAIIGYDVRDQQAIDRAMIALDGTPNKGKLGANAILGVSIAVARAAADYLEVPLYSYLGGFNTKVLPTPMMNIINGGSHSDAPIAFQEFMIMPVGAPTFKEALRWGAEVFHALKKILKERGLETAVGDEGGFAPKFEGTEDGVETILKAIEAAGYEAGENGIMIGFDCASSEFYDAERKVYDYSKFEGEGGAVRTAAEQIDYLEELVNKYPIITIEDGMDENDWDGWKALTERLGGRVQLVGDDFFVTNTDYLARGIKEEAANSILIKVNQIGTLTETFEAIEMAKEAGYTAVVSHRSGETEDSTIADIAVATNAGQIKTGSLSRTDRIAKYNQLLRIEDQLGEVAQYKGIKSFYNLDKCGR</sequence>
<organism>
    <name type="scientific">Streptococcus agalactiae</name>
    <dbReference type="NCBI Taxonomy" id="1311"/>
    <lineage>
        <taxon>Bacteria</taxon>
        <taxon>Bacillati</taxon>
        <taxon>Bacillota</taxon>
        <taxon>Bacilli</taxon>
        <taxon>Lactobacillales</taxon>
        <taxon>Streptococcaceae</taxon>
        <taxon>Streptococcus</taxon>
    </lineage>
</organism>
<keyword id="KW-0963">Cytoplasm</keyword>
<keyword id="KW-0903">Direct protein sequencing</keyword>
<keyword id="KW-0324">Glycolysis</keyword>
<keyword id="KW-0456">Lyase</keyword>
<keyword id="KW-0460">Magnesium</keyword>
<keyword id="KW-0479">Metal-binding</keyword>
<keyword id="KW-0964">Secreted</keyword>
<gene>
    <name evidence="1" type="primary">eno</name>
</gene>
<feature type="chain" id="PRO_0000280878" description="Enolase">
    <location>
        <begin position="1"/>
        <end position="438"/>
    </location>
</feature>
<feature type="active site" description="Proton donor" evidence="1">
    <location>
        <position position="205"/>
    </location>
</feature>
<feature type="active site" description="Proton acceptor" evidence="1">
    <location>
        <position position="344"/>
    </location>
</feature>
<feature type="binding site" evidence="1">
    <location>
        <position position="163"/>
    </location>
    <ligand>
        <name>(2R)-2-phosphoglycerate</name>
        <dbReference type="ChEBI" id="CHEBI:58289"/>
    </ligand>
</feature>
<feature type="binding site" evidence="1">
    <location>
        <position position="243"/>
    </location>
    <ligand>
        <name>Mg(2+)</name>
        <dbReference type="ChEBI" id="CHEBI:18420"/>
    </ligand>
</feature>
<feature type="binding site" evidence="1">
    <location>
        <position position="292"/>
    </location>
    <ligand>
        <name>Mg(2+)</name>
        <dbReference type="ChEBI" id="CHEBI:18420"/>
    </ligand>
</feature>
<feature type="binding site" evidence="1">
    <location>
        <position position="319"/>
    </location>
    <ligand>
        <name>Mg(2+)</name>
        <dbReference type="ChEBI" id="CHEBI:18420"/>
    </ligand>
</feature>
<feature type="binding site" evidence="1">
    <location>
        <position position="344"/>
    </location>
    <ligand>
        <name>(2R)-2-phosphoglycerate</name>
        <dbReference type="ChEBI" id="CHEBI:58289"/>
    </ligand>
</feature>
<feature type="binding site" evidence="1">
    <location>
        <position position="373"/>
    </location>
    <ligand>
        <name>(2R)-2-phosphoglycerate</name>
        <dbReference type="ChEBI" id="CHEBI:58289"/>
    </ligand>
</feature>
<feature type="binding site" evidence="1">
    <location>
        <position position="374"/>
    </location>
    <ligand>
        <name>(2R)-2-phosphoglycerate</name>
        <dbReference type="ChEBI" id="CHEBI:58289"/>
    </ligand>
</feature>
<feature type="binding site" evidence="1">
    <location>
        <position position="395"/>
    </location>
    <ligand>
        <name>(2R)-2-phosphoglycerate</name>
        <dbReference type="ChEBI" id="CHEBI:58289"/>
    </ligand>
</feature>
<feature type="sequence conflict" description="In Ref. 1; AA sequence." evidence="2" ref="1">
    <original>GV</original>
    <variation>R</variation>
    <location>
        <begin position="218"/>
        <end position="219"/>
    </location>
</feature>
<dbReference type="EC" id="4.2.1.11" evidence="1"/>
<dbReference type="EMBL" id="AF439649">
    <property type="protein sequence ID" value="AAL85688.1"/>
    <property type="molecule type" value="Genomic_DNA"/>
</dbReference>
<dbReference type="SMR" id="Q8RP81"/>
<dbReference type="UniPathway" id="UPA00109">
    <property type="reaction ID" value="UER00187"/>
</dbReference>
<dbReference type="GO" id="GO:0009986">
    <property type="term" value="C:cell surface"/>
    <property type="evidence" value="ECO:0007669"/>
    <property type="project" value="UniProtKB-SubCell"/>
</dbReference>
<dbReference type="GO" id="GO:0005576">
    <property type="term" value="C:extracellular region"/>
    <property type="evidence" value="ECO:0007669"/>
    <property type="project" value="UniProtKB-SubCell"/>
</dbReference>
<dbReference type="GO" id="GO:0009274">
    <property type="term" value="C:peptidoglycan-based cell wall"/>
    <property type="evidence" value="ECO:0007669"/>
    <property type="project" value="UniProtKB-ARBA"/>
</dbReference>
<dbReference type="GO" id="GO:0000015">
    <property type="term" value="C:phosphopyruvate hydratase complex"/>
    <property type="evidence" value="ECO:0007669"/>
    <property type="project" value="InterPro"/>
</dbReference>
<dbReference type="GO" id="GO:0000287">
    <property type="term" value="F:magnesium ion binding"/>
    <property type="evidence" value="ECO:0007669"/>
    <property type="project" value="UniProtKB-UniRule"/>
</dbReference>
<dbReference type="GO" id="GO:0004634">
    <property type="term" value="F:phosphopyruvate hydratase activity"/>
    <property type="evidence" value="ECO:0007669"/>
    <property type="project" value="UniProtKB-UniRule"/>
</dbReference>
<dbReference type="GO" id="GO:0006096">
    <property type="term" value="P:glycolytic process"/>
    <property type="evidence" value="ECO:0007669"/>
    <property type="project" value="UniProtKB-UniRule"/>
</dbReference>
<dbReference type="CDD" id="cd03313">
    <property type="entry name" value="enolase"/>
    <property type="match status" value="1"/>
</dbReference>
<dbReference type="FunFam" id="3.20.20.120:FF:000001">
    <property type="entry name" value="Enolase"/>
    <property type="match status" value="1"/>
</dbReference>
<dbReference type="FunFam" id="3.30.390.10:FF:000001">
    <property type="entry name" value="Enolase"/>
    <property type="match status" value="1"/>
</dbReference>
<dbReference type="Gene3D" id="3.20.20.120">
    <property type="entry name" value="Enolase-like C-terminal domain"/>
    <property type="match status" value="1"/>
</dbReference>
<dbReference type="Gene3D" id="3.30.390.10">
    <property type="entry name" value="Enolase-like, N-terminal domain"/>
    <property type="match status" value="1"/>
</dbReference>
<dbReference type="HAMAP" id="MF_00318">
    <property type="entry name" value="Enolase"/>
    <property type="match status" value="1"/>
</dbReference>
<dbReference type="InterPro" id="IPR000941">
    <property type="entry name" value="Enolase"/>
</dbReference>
<dbReference type="InterPro" id="IPR036849">
    <property type="entry name" value="Enolase-like_C_sf"/>
</dbReference>
<dbReference type="InterPro" id="IPR029017">
    <property type="entry name" value="Enolase-like_N"/>
</dbReference>
<dbReference type="InterPro" id="IPR020810">
    <property type="entry name" value="Enolase_C"/>
</dbReference>
<dbReference type="InterPro" id="IPR020809">
    <property type="entry name" value="Enolase_CS"/>
</dbReference>
<dbReference type="InterPro" id="IPR020811">
    <property type="entry name" value="Enolase_N"/>
</dbReference>
<dbReference type="NCBIfam" id="TIGR01060">
    <property type="entry name" value="eno"/>
    <property type="match status" value="1"/>
</dbReference>
<dbReference type="PANTHER" id="PTHR11902">
    <property type="entry name" value="ENOLASE"/>
    <property type="match status" value="1"/>
</dbReference>
<dbReference type="PANTHER" id="PTHR11902:SF1">
    <property type="entry name" value="ENOLASE"/>
    <property type="match status" value="1"/>
</dbReference>
<dbReference type="Pfam" id="PF00113">
    <property type="entry name" value="Enolase_C"/>
    <property type="match status" value="1"/>
</dbReference>
<dbReference type="Pfam" id="PF03952">
    <property type="entry name" value="Enolase_N"/>
    <property type="match status" value="1"/>
</dbReference>
<dbReference type="PIRSF" id="PIRSF001400">
    <property type="entry name" value="Enolase"/>
    <property type="match status" value="1"/>
</dbReference>
<dbReference type="PRINTS" id="PR00148">
    <property type="entry name" value="ENOLASE"/>
</dbReference>
<dbReference type="SFLD" id="SFLDS00001">
    <property type="entry name" value="Enolase"/>
    <property type="match status" value="1"/>
</dbReference>
<dbReference type="SFLD" id="SFLDF00002">
    <property type="entry name" value="enolase"/>
    <property type="match status" value="1"/>
</dbReference>
<dbReference type="SMART" id="SM01192">
    <property type="entry name" value="Enolase_C"/>
    <property type="match status" value="1"/>
</dbReference>
<dbReference type="SMART" id="SM01193">
    <property type="entry name" value="Enolase_N"/>
    <property type="match status" value="1"/>
</dbReference>
<dbReference type="SUPFAM" id="SSF51604">
    <property type="entry name" value="Enolase C-terminal domain-like"/>
    <property type="match status" value="1"/>
</dbReference>
<dbReference type="SUPFAM" id="SSF54826">
    <property type="entry name" value="Enolase N-terminal domain-like"/>
    <property type="match status" value="1"/>
</dbReference>
<dbReference type="PROSITE" id="PS00164">
    <property type="entry name" value="ENOLASE"/>
    <property type="match status" value="1"/>
</dbReference>
<evidence type="ECO:0000255" key="1">
    <source>
        <dbReference type="HAMAP-Rule" id="MF_00318"/>
    </source>
</evidence>
<evidence type="ECO:0000269" key="2">
    <source>
    </source>
</evidence>
<name>ENO_STRAG</name>
<protein>
    <recommendedName>
        <fullName evidence="1">Enolase</fullName>
        <ecNumber evidence="1">4.2.1.11</ecNumber>
    </recommendedName>
    <alternativeName>
        <fullName evidence="1">2-phospho-D-glycerate hydro-lyase</fullName>
    </alternativeName>
    <alternativeName>
        <fullName evidence="1">2-phosphoglycerate dehydratase</fullName>
    </alternativeName>
</protein>